<gene>
    <name evidence="1" type="primary">purC</name>
    <name type="ordered locus">Paes_1375</name>
</gene>
<reference key="1">
    <citation type="submission" date="2008-06" db="EMBL/GenBank/DDBJ databases">
        <title>Complete sequence of chromosome of Prosthecochloris aestuarii DSM 271.</title>
        <authorList>
            <consortium name="US DOE Joint Genome Institute"/>
            <person name="Lucas S."/>
            <person name="Copeland A."/>
            <person name="Lapidus A."/>
            <person name="Glavina del Rio T."/>
            <person name="Dalin E."/>
            <person name="Tice H."/>
            <person name="Bruce D."/>
            <person name="Goodwin L."/>
            <person name="Pitluck S."/>
            <person name="Schmutz J."/>
            <person name="Larimer F."/>
            <person name="Land M."/>
            <person name="Hauser L."/>
            <person name="Kyrpides N."/>
            <person name="Anderson I."/>
            <person name="Liu Z."/>
            <person name="Li T."/>
            <person name="Zhao F."/>
            <person name="Overmann J."/>
            <person name="Bryant D.A."/>
            <person name="Richardson P."/>
        </authorList>
    </citation>
    <scope>NUCLEOTIDE SEQUENCE [LARGE SCALE GENOMIC DNA]</scope>
    <source>
        <strain>DSM 271 / SK 413</strain>
    </source>
</reference>
<protein>
    <recommendedName>
        <fullName evidence="1">Phosphoribosylaminoimidazole-succinocarboxamide synthase</fullName>
        <ecNumber evidence="1">6.3.2.6</ecNumber>
    </recommendedName>
    <alternativeName>
        <fullName evidence="1">SAICAR synthetase</fullName>
    </alternativeName>
</protein>
<name>PUR7_PROA2</name>
<proteinExistence type="inferred from homology"/>
<comment type="catalytic activity">
    <reaction evidence="1">
        <text>5-amino-1-(5-phospho-D-ribosyl)imidazole-4-carboxylate + L-aspartate + ATP = (2S)-2-[5-amino-1-(5-phospho-beta-D-ribosyl)imidazole-4-carboxamido]succinate + ADP + phosphate + 2 H(+)</text>
        <dbReference type="Rhea" id="RHEA:22628"/>
        <dbReference type="ChEBI" id="CHEBI:15378"/>
        <dbReference type="ChEBI" id="CHEBI:29991"/>
        <dbReference type="ChEBI" id="CHEBI:30616"/>
        <dbReference type="ChEBI" id="CHEBI:43474"/>
        <dbReference type="ChEBI" id="CHEBI:58443"/>
        <dbReference type="ChEBI" id="CHEBI:77657"/>
        <dbReference type="ChEBI" id="CHEBI:456216"/>
        <dbReference type="EC" id="6.3.2.6"/>
    </reaction>
</comment>
<comment type="pathway">
    <text evidence="1">Purine metabolism; IMP biosynthesis via de novo pathway; 5-amino-1-(5-phospho-D-ribosyl)imidazole-4-carboxamide from 5-amino-1-(5-phospho-D-ribosyl)imidazole-4-carboxylate: step 1/2.</text>
</comment>
<comment type="similarity">
    <text evidence="1">Belongs to the SAICAR synthetase family.</text>
</comment>
<feature type="chain" id="PRO_1000096002" description="Phosphoribosylaminoimidazole-succinocarboxamide synthase">
    <location>
        <begin position="1"/>
        <end position="235"/>
    </location>
</feature>
<keyword id="KW-0067">ATP-binding</keyword>
<keyword id="KW-0436">Ligase</keyword>
<keyword id="KW-0547">Nucleotide-binding</keyword>
<keyword id="KW-0658">Purine biosynthesis</keyword>
<dbReference type="EC" id="6.3.2.6" evidence="1"/>
<dbReference type="EMBL" id="CP001108">
    <property type="protein sequence ID" value="ACF46396.1"/>
    <property type="molecule type" value="Genomic_DNA"/>
</dbReference>
<dbReference type="RefSeq" id="WP_012505930.1">
    <property type="nucleotide sequence ID" value="NC_011059.1"/>
</dbReference>
<dbReference type="SMR" id="B4S8K9"/>
<dbReference type="STRING" id="290512.Paes_1375"/>
<dbReference type="KEGG" id="paa:Paes_1375"/>
<dbReference type="eggNOG" id="COG0152">
    <property type="taxonomic scope" value="Bacteria"/>
</dbReference>
<dbReference type="HOGENOM" id="CLU_061495_2_0_10"/>
<dbReference type="UniPathway" id="UPA00074">
    <property type="reaction ID" value="UER00131"/>
</dbReference>
<dbReference type="Proteomes" id="UP000002725">
    <property type="component" value="Chromosome"/>
</dbReference>
<dbReference type="GO" id="GO:0005524">
    <property type="term" value="F:ATP binding"/>
    <property type="evidence" value="ECO:0007669"/>
    <property type="project" value="UniProtKB-KW"/>
</dbReference>
<dbReference type="GO" id="GO:0004639">
    <property type="term" value="F:phosphoribosylaminoimidazolesuccinocarboxamide synthase activity"/>
    <property type="evidence" value="ECO:0007669"/>
    <property type="project" value="UniProtKB-UniRule"/>
</dbReference>
<dbReference type="GO" id="GO:0006189">
    <property type="term" value="P:'de novo' IMP biosynthetic process"/>
    <property type="evidence" value="ECO:0007669"/>
    <property type="project" value="UniProtKB-UniRule"/>
</dbReference>
<dbReference type="GO" id="GO:0009236">
    <property type="term" value="P:cobalamin biosynthetic process"/>
    <property type="evidence" value="ECO:0007669"/>
    <property type="project" value="InterPro"/>
</dbReference>
<dbReference type="CDD" id="cd01415">
    <property type="entry name" value="SAICAR_synt_PurC"/>
    <property type="match status" value="1"/>
</dbReference>
<dbReference type="FunFam" id="3.30.470.20:FF:000006">
    <property type="entry name" value="Phosphoribosylaminoimidazole-succinocarboxamide synthase"/>
    <property type="match status" value="1"/>
</dbReference>
<dbReference type="Gene3D" id="3.30.470.20">
    <property type="entry name" value="ATP-grasp fold, B domain"/>
    <property type="match status" value="1"/>
</dbReference>
<dbReference type="Gene3D" id="3.30.200.20">
    <property type="entry name" value="Phosphorylase Kinase, domain 1"/>
    <property type="match status" value="1"/>
</dbReference>
<dbReference type="HAMAP" id="MF_00137">
    <property type="entry name" value="SAICAR_synth"/>
    <property type="match status" value="1"/>
</dbReference>
<dbReference type="InterPro" id="IPR028923">
    <property type="entry name" value="SAICAR_synt/ADE2_N"/>
</dbReference>
<dbReference type="InterPro" id="IPR033934">
    <property type="entry name" value="SAICAR_synt_PurC"/>
</dbReference>
<dbReference type="InterPro" id="IPR001636">
    <property type="entry name" value="SAICAR_synth"/>
</dbReference>
<dbReference type="InterPro" id="IPR050089">
    <property type="entry name" value="SAICAR_synthetase"/>
</dbReference>
<dbReference type="InterPro" id="IPR018236">
    <property type="entry name" value="SAICAR_synthetase_CS"/>
</dbReference>
<dbReference type="NCBIfam" id="TIGR00081">
    <property type="entry name" value="purC"/>
    <property type="match status" value="1"/>
</dbReference>
<dbReference type="PANTHER" id="PTHR43599">
    <property type="entry name" value="MULTIFUNCTIONAL PROTEIN ADE2"/>
    <property type="match status" value="1"/>
</dbReference>
<dbReference type="PANTHER" id="PTHR43599:SF3">
    <property type="entry name" value="SI:DKEY-6E2.2"/>
    <property type="match status" value="1"/>
</dbReference>
<dbReference type="Pfam" id="PF01259">
    <property type="entry name" value="SAICAR_synt"/>
    <property type="match status" value="1"/>
</dbReference>
<dbReference type="SUPFAM" id="SSF56104">
    <property type="entry name" value="SAICAR synthase-like"/>
    <property type="match status" value="1"/>
</dbReference>
<dbReference type="PROSITE" id="PS01057">
    <property type="entry name" value="SAICAR_SYNTHETASE_1"/>
    <property type="match status" value="1"/>
</dbReference>
<dbReference type="PROSITE" id="PS01058">
    <property type="entry name" value="SAICAR_SYNTHETASE_2"/>
    <property type="match status" value="1"/>
</dbReference>
<sequence>MNKVSLLHEGKAKKVFLTDNSDLVIQEFKDDATAFNAKKKGSIQNKGVVNNAISCTLFTFLGENGIPTHYVEQLSDRDMLCKHLDIIKVEVVVRNVAAGSLVRRYGFKEGFVLETPIIELYLKDDDLDDPLMNESHAVALGLASYEELDRLKELAAAINTLLRSFFADRKLNLVDFKLEFGRHNGTILLGDEISPDTCRFWDLDSGEKMDKDRFRFDMGGVEDAYSEVQRRVLEL</sequence>
<accession>B4S8K9</accession>
<organism>
    <name type="scientific">Prosthecochloris aestuarii (strain DSM 271 / SK 413)</name>
    <dbReference type="NCBI Taxonomy" id="290512"/>
    <lineage>
        <taxon>Bacteria</taxon>
        <taxon>Pseudomonadati</taxon>
        <taxon>Chlorobiota</taxon>
        <taxon>Chlorobiia</taxon>
        <taxon>Chlorobiales</taxon>
        <taxon>Chlorobiaceae</taxon>
        <taxon>Prosthecochloris</taxon>
    </lineage>
</organism>
<evidence type="ECO:0000255" key="1">
    <source>
        <dbReference type="HAMAP-Rule" id="MF_00137"/>
    </source>
</evidence>